<protein>
    <recommendedName>
        <fullName evidence="1">Alanine--tRNA ligase</fullName>
        <ecNumber evidence="1">6.1.1.7</ecNumber>
    </recommendedName>
    <alternativeName>
        <fullName evidence="1">Alanyl-tRNA synthetase</fullName>
        <shortName evidence="1">AlaRS</shortName>
    </alternativeName>
</protein>
<evidence type="ECO:0000255" key="1">
    <source>
        <dbReference type="HAMAP-Rule" id="MF_00036"/>
    </source>
</evidence>
<evidence type="ECO:0000256" key="2">
    <source>
        <dbReference type="SAM" id="MobiDB-lite"/>
    </source>
</evidence>
<evidence type="ECO:0000305" key="3"/>
<dbReference type="EC" id="6.1.1.7" evidence="1"/>
<dbReference type="EMBL" id="CP000607">
    <property type="protein sequence ID" value="ABP37605.1"/>
    <property type="status" value="ALT_INIT"/>
    <property type="molecule type" value="Genomic_DNA"/>
</dbReference>
<dbReference type="SMR" id="A4SGJ6"/>
<dbReference type="STRING" id="290318.Cvib_1595"/>
<dbReference type="KEGG" id="pvi:Cvib_1595"/>
<dbReference type="eggNOG" id="COG0013">
    <property type="taxonomic scope" value="Bacteria"/>
</dbReference>
<dbReference type="HOGENOM" id="CLU_004485_1_1_10"/>
<dbReference type="OrthoDB" id="9803884at2"/>
<dbReference type="GO" id="GO:0005737">
    <property type="term" value="C:cytoplasm"/>
    <property type="evidence" value="ECO:0007669"/>
    <property type="project" value="UniProtKB-SubCell"/>
</dbReference>
<dbReference type="GO" id="GO:0004813">
    <property type="term" value="F:alanine-tRNA ligase activity"/>
    <property type="evidence" value="ECO:0007669"/>
    <property type="project" value="UniProtKB-UniRule"/>
</dbReference>
<dbReference type="GO" id="GO:0002161">
    <property type="term" value="F:aminoacyl-tRNA deacylase activity"/>
    <property type="evidence" value="ECO:0007669"/>
    <property type="project" value="TreeGrafter"/>
</dbReference>
<dbReference type="GO" id="GO:0005524">
    <property type="term" value="F:ATP binding"/>
    <property type="evidence" value="ECO:0007669"/>
    <property type="project" value="UniProtKB-UniRule"/>
</dbReference>
<dbReference type="GO" id="GO:0000049">
    <property type="term" value="F:tRNA binding"/>
    <property type="evidence" value="ECO:0007669"/>
    <property type="project" value="UniProtKB-KW"/>
</dbReference>
<dbReference type="GO" id="GO:0008270">
    <property type="term" value="F:zinc ion binding"/>
    <property type="evidence" value="ECO:0007669"/>
    <property type="project" value="UniProtKB-UniRule"/>
</dbReference>
<dbReference type="GO" id="GO:0006419">
    <property type="term" value="P:alanyl-tRNA aminoacylation"/>
    <property type="evidence" value="ECO:0007669"/>
    <property type="project" value="UniProtKB-UniRule"/>
</dbReference>
<dbReference type="CDD" id="cd00673">
    <property type="entry name" value="AlaRS_core"/>
    <property type="match status" value="1"/>
</dbReference>
<dbReference type="FunFam" id="3.10.310.40:FF:000001">
    <property type="entry name" value="Alanine--tRNA ligase"/>
    <property type="match status" value="1"/>
</dbReference>
<dbReference type="FunFam" id="3.30.930.10:FF:000004">
    <property type="entry name" value="Alanine--tRNA ligase"/>
    <property type="match status" value="1"/>
</dbReference>
<dbReference type="FunFam" id="3.30.980.10:FF:000004">
    <property type="entry name" value="Alanine--tRNA ligase, cytoplasmic"/>
    <property type="match status" value="1"/>
</dbReference>
<dbReference type="Gene3D" id="2.40.30.130">
    <property type="match status" value="1"/>
</dbReference>
<dbReference type="Gene3D" id="3.10.310.40">
    <property type="match status" value="1"/>
</dbReference>
<dbReference type="Gene3D" id="3.30.54.20">
    <property type="match status" value="1"/>
</dbReference>
<dbReference type="Gene3D" id="3.30.930.10">
    <property type="entry name" value="Bira Bifunctional Protein, Domain 2"/>
    <property type="match status" value="1"/>
</dbReference>
<dbReference type="Gene3D" id="3.30.980.10">
    <property type="entry name" value="Threonyl-trna Synthetase, Chain A, domain 2"/>
    <property type="match status" value="1"/>
</dbReference>
<dbReference type="HAMAP" id="MF_00036_B">
    <property type="entry name" value="Ala_tRNA_synth_B"/>
    <property type="match status" value="1"/>
</dbReference>
<dbReference type="InterPro" id="IPR045864">
    <property type="entry name" value="aa-tRNA-synth_II/BPL/LPL"/>
</dbReference>
<dbReference type="InterPro" id="IPR002318">
    <property type="entry name" value="Ala-tRNA-lgiase_IIc"/>
</dbReference>
<dbReference type="InterPro" id="IPR018162">
    <property type="entry name" value="Ala-tRNA-ligase_IIc_anticod-bd"/>
</dbReference>
<dbReference type="InterPro" id="IPR018165">
    <property type="entry name" value="Ala-tRNA-synth_IIc_core"/>
</dbReference>
<dbReference type="InterPro" id="IPR018164">
    <property type="entry name" value="Ala-tRNA-synth_IIc_N"/>
</dbReference>
<dbReference type="InterPro" id="IPR050058">
    <property type="entry name" value="Ala-tRNA_ligase"/>
</dbReference>
<dbReference type="InterPro" id="IPR023033">
    <property type="entry name" value="Ala_tRNA_ligase_euk/bac"/>
</dbReference>
<dbReference type="InterPro" id="IPR003156">
    <property type="entry name" value="DHHA1_dom"/>
</dbReference>
<dbReference type="InterPro" id="IPR018163">
    <property type="entry name" value="Thr/Ala-tRNA-synth_IIc_edit"/>
</dbReference>
<dbReference type="InterPro" id="IPR009000">
    <property type="entry name" value="Transl_B-barrel_sf"/>
</dbReference>
<dbReference type="InterPro" id="IPR012947">
    <property type="entry name" value="tRNA_SAD"/>
</dbReference>
<dbReference type="NCBIfam" id="TIGR00344">
    <property type="entry name" value="alaS"/>
    <property type="match status" value="1"/>
</dbReference>
<dbReference type="PANTHER" id="PTHR11777:SF9">
    <property type="entry name" value="ALANINE--TRNA LIGASE, CYTOPLASMIC"/>
    <property type="match status" value="1"/>
</dbReference>
<dbReference type="PANTHER" id="PTHR11777">
    <property type="entry name" value="ALANYL-TRNA SYNTHETASE"/>
    <property type="match status" value="1"/>
</dbReference>
<dbReference type="Pfam" id="PF02272">
    <property type="entry name" value="DHHA1"/>
    <property type="match status" value="1"/>
</dbReference>
<dbReference type="Pfam" id="PF01411">
    <property type="entry name" value="tRNA-synt_2c"/>
    <property type="match status" value="1"/>
</dbReference>
<dbReference type="Pfam" id="PF07973">
    <property type="entry name" value="tRNA_SAD"/>
    <property type="match status" value="1"/>
</dbReference>
<dbReference type="PRINTS" id="PR00980">
    <property type="entry name" value="TRNASYNTHALA"/>
</dbReference>
<dbReference type="SMART" id="SM00863">
    <property type="entry name" value="tRNA_SAD"/>
    <property type="match status" value="1"/>
</dbReference>
<dbReference type="SUPFAM" id="SSF55681">
    <property type="entry name" value="Class II aaRS and biotin synthetases"/>
    <property type="match status" value="1"/>
</dbReference>
<dbReference type="SUPFAM" id="SSF101353">
    <property type="entry name" value="Putative anticodon-binding domain of alanyl-tRNA synthetase (AlaRS)"/>
    <property type="match status" value="1"/>
</dbReference>
<dbReference type="SUPFAM" id="SSF55186">
    <property type="entry name" value="ThrRS/AlaRS common domain"/>
    <property type="match status" value="1"/>
</dbReference>
<dbReference type="SUPFAM" id="SSF50447">
    <property type="entry name" value="Translation proteins"/>
    <property type="match status" value="1"/>
</dbReference>
<dbReference type="PROSITE" id="PS50860">
    <property type="entry name" value="AA_TRNA_LIGASE_II_ALA"/>
    <property type="match status" value="1"/>
</dbReference>
<accession>A4SGJ6</accession>
<sequence length="885" mass="98142">MKSSDIRQSFLDFFVGKSHAIVRSAPVIPADDPTLLFTNAGMNQFKDVFLAKGTRSYSRAADTQKCIRASGKHNDLEDVGRDTYHHTFFEMLGNWSFGDYYKEEAITWAWELLTVVWKLPEERLYATVYHDDDESFRIWEEKTSIRPDHILRFGDKDNFWEMGETGPCGPCSEIHIDLTPDGSGRALVNADDPQAIELWNLVFIQYDRQVDGRLEPLPQRHVDTGMGFERVCAVMQGKSSNYDTDVFRPLFDTITELTGVEYGASMHDPQDIAMRVIADHARTLSFALSDGAMPSNEGRGYVLRRILRRALRYAKDLGYNKPILHRLVATVADSMGDVFPELRDRQDAVARIVKAEEESFLVTLDRGIEIFNGLVGKVRGEGSSTLEGEDAFKLYDTYGFPFDLTRLMASSAGLQVDGEGFERCMQEQKTRARQDRREKQRGGAEEGSWEWFSDLHATEFTGYDGLEADASIIGISRSKKNLLLVLDRTPFYAESGGQTGDRGWIETGEYRLEVTDTQKDGDSFVHVVTRAFDNVRDSEADPADIAVGPGRVHASVDRKLRQATERNHTATHLLHAVLRHTLGAHVQQKGSLVNPERLRFDFSHFSKLTPEEIDAVESAVNDCIRQAEATLKHADVPYDDAITKGALAFFGDKYADLVRVVEIPGISVELCGGTHVDNVGQIGLFKIVGESSVAAGVRRIEALTGRAAEELMWNEYRELHDVRQLLKMKAEEPPAEKVAAILEERRALEKQLAELKAEVLLVKLQGDASALEDVCGCRIVARVVDGADAEGLRYAAQMLRQQFPLSAGLLCSSAEGKVSLAAFASDRAVKELGIDAGKLIRQAAAAVKGGGGGKAEFATAGGKNPEGMEDACRVFREAVRCIVKA</sequence>
<feature type="chain" id="PRO_0000347732" description="Alanine--tRNA ligase">
    <location>
        <begin position="1"/>
        <end position="885"/>
    </location>
</feature>
<feature type="region of interest" description="Disordered" evidence="2">
    <location>
        <begin position="426"/>
        <end position="445"/>
    </location>
</feature>
<feature type="compositionally biased region" description="Basic and acidic residues" evidence="2">
    <location>
        <begin position="426"/>
        <end position="444"/>
    </location>
</feature>
<feature type="binding site" evidence="1">
    <location>
        <position position="568"/>
    </location>
    <ligand>
        <name>Zn(2+)</name>
        <dbReference type="ChEBI" id="CHEBI:29105"/>
    </ligand>
</feature>
<feature type="binding site" evidence="1">
    <location>
        <position position="572"/>
    </location>
    <ligand>
        <name>Zn(2+)</name>
        <dbReference type="ChEBI" id="CHEBI:29105"/>
    </ligand>
</feature>
<feature type="binding site" evidence="1">
    <location>
        <position position="671"/>
    </location>
    <ligand>
        <name>Zn(2+)</name>
        <dbReference type="ChEBI" id="CHEBI:29105"/>
    </ligand>
</feature>
<feature type="binding site" evidence="1">
    <location>
        <position position="675"/>
    </location>
    <ligand>
        <name>Zn(2+)</name>
        <dbReference type="ChEBI" id="CHEBI:29105"/>
    </ligand>
</feature>
<comment type="function">
    <text evidence="1">Catalyzes the attachment of alanine to tRNA(Ala) in a two-step reaction: alanine is first activated by ATP to form Ala-AMP and then transferred to the acceptor end of tRNA(Ala). Also edits incorrectly charged Ser-tRNA(Ala) and Gly-tRNA(Ala) via its editing domain.</text>
</comment>
<comment type="catalytic activity">
    <reaction evidence="1">
        <text>tRNA(Ala) + L-alanine + ATP = L-alanyl-tRNA(Ala) + AMP + diphosphate</text>
        <dbReference type="Rhea" id="RHEA:12540"/>
        <dbReference type="Rhea" id="RHEA-COMP:9657"/>
        <dbReference type="Rhea" id="RHEA-COMP:9923"/>
        <dbReference type="ChEBI" id="CHEBI:30616"/>
        <dbReference type="ChEBI" id="CHEBI:33019"/>
        <dbReference type="ChEBI" id="CHEBI:57972"/>
        <dbReference type="ChEBI" id="CHEBI:78442"/>
        <dbReference type="ChEBI" id="CHEBI:78497"/>
        <dbReference type="ChEBI" id="CHEBI:456215"/>
        <dbReference type="EC" id="6.1.1.7"/>
    </reaction>
</comment>
<comment type="cofactor">
    <cofactor evidence="1">
        <name>Zn(2+)</name>
        <dbReference type="ChEBI" id="CHEBI:29105"/>
    </cofactor>
    <text evidence="1">Binds 1 zinc ion per subunit.</text>
</comment>
<comment type="subcellular location">
    <subcellularLocation>
        <location evidence="1">Cytoplasm</location>
    </subcellularLocation>
</comment>
<comment type="domain">
    <text evidence="1">Consists of three domains; the N-terminal catalytic domain, the editing domain and the C-terminal C-Ala domain. The editing domain removes incorrectly charged amino acids, while the C-Ala domain, along with tRNA(Ala), serves as a bridge to cooperatively bring together the editing and aminoacylation centers thus stimulating deacylation of misacylated tRNAs.</text>
</comment>
<comment type="similarity">
    <text evidence="1">Belongs to the class-II aminoacyl-tRNA synthetase family.</text>
</comment>
<comment type="sequence caution" evidence="3">
    <conflict type="erroneous initiation">
        <sequence resource="EMBL-CDS" id="ABP37605"/>
    </conflict>
</comment>
<reference key="1">
    <citation type="submission" date="2007-03" db="EMBL/GenBank/DDBJ databases">
        <title>Complete sequence of Prosthecochloris vibrioformis DSM 265.</title>
        <authorList>
            <consortium name="US DOE Joint Genome Institute"/>
            <person name="Copeland A."/>
            <person name="Lucas S."/>
            <person name="Lapidus A."/>
            <person name="Barry K."/>
            <person name="Detter J.C."/>
            <person name="Glavina del Rio T."/>
            <person name="Hammon N."/>
            <person name="Israni S."/>
            <person name="Pitluck S."/>
            <person name="Schmutz J."/>
            <person name="Larimer F."/>
            <person name="Land M."/>
            <person name="Hauser L."/>
            <person name="Mikhailova N."/>
            <person name="Li T."/>
            <person name="Overmann J."/>
            <person name="Schuster S.C."/>
            <person name="Bryant D.A."/>
            <person name="Richardson P."/>
        </authorList>
    </citation>
    <scope>NUCLEOTIDE SEQUENCE [LARGE SCALE GENOMIC DNA]</scope>
    <source>
        <strain>DSM 265 / 1930</strain>
    </source>
</reference>
<keyword id="KW-0030">Aminoacyl-tRNA synthetase</keyword>
<keyword id="KW-0067">ATP-binding</keyword>
<keyword id="KW-0963">Cytoplasm</keyword>
<keyword id="KW-0436">Ligase</keyword>
<keyword id="KW-0479">Metal-binding</keyword>
<keyword id="KW-0547">Nucleotide-binding</keyword>
<keyword id="KW-0648">Protein biosynthesis</keyword>
<keyword id="KW-0694">RNA-binding</keyword>
<keyword id="KW-0820">tRNA-binding</keyword>
<keyword id="KW-0862">Zinc</keyword>
<proteinExistence type="inferred from homology"/>
<organism>
    <name type="scientific">Chlorobium phaeovibrioides (strain DSM 265 / 1930)</name>
    <name type="common">Prosthecochloris vibrioformis (strain DSM 265)</name>
    <dbReference type="NCBI Taxonomy" id="290318"/>
    <lineage>
        <taxon>Bacteria</taxon>
        <taxon>Pseudomonadati</taxon>
        <taxon>Chlorobiota</taxon>
        <taxon>Chlorobiia</taxon>
        <taxon>Chlorobiales</taxon>
        <taxon>Chlorobiaceae</taxon>
        <taxon>Chlorobium/Pelodictyon group</taxon>
        <taxon>Chlorobium</taxon>
    </lineage>
</organism>
<name>SYA_CHLPM</name>
<gene>
    <name evidence="1" type="primary">alaS</name>
    <name type="ordered locus">Cvib_1595</name>
</gene>